<gene>
    <name type="primary">CXCL9</name>
    <name type="synonym">CMK</name>
    <name type="synonym">MIG</name>
    <name type="synonym">SCYB9</name>
</gene>
<keyword id="KW-0202">Cytokine</keyword>
<keyword id="KW-0903">Direct protein sequencing</keyword>
<keyword id="KW-1015">Disulfide bond</keyword>
<keyword id="KW-0395">Inflammatory response</keyword>
<keyword id="KW-1267">Proteomics identification</keyword>
<keyword id="KW-1185">Reference proteome</keyword>
<keyword id="KW-0964">Secreted</keyword>
<keyword id="KW-0732">Signal</keyword>
<reference key="1">
    <citation type="journal article" date="1993" name="Biochem. Biophys. Res. Commun.">
        <title>HuMig: a new human member of the chemokine family of cytokines.</title>
        <authorList>
            <person name="Farber J.M."/>
        </authorList>
    </citation>
    <scope>NUCLEOTIDE SEQUENCE [MRNA]</scope>
    <source>
        <tissue>Monocyte</tissue>
    </source>
</reference>
<reference key="2">
    <citation type="journal article" date="2004" name="Genome Res.">
        <title>The status, quality, and expansion of the NIH full-length cDNA project: the Mammalian Gene Collection (MGC).</title>
        <authorList>
            <consortium name="The MGC Project Team"/>
        </authorList>
    </citation>
    <scope>NUCLEOTIDE SEQUENCE [LARGE SCALE MRNA]</scope>
    <source>
        <tissue>Placenta</tissue>
        <tissue>Skin</tissue>
    </source>
</reference>
<reference key="3">
    <citation type="journal article" date="1999" name="J. Invest. Dermatol.">
        <title>Human IP-9: a keratinocyte derived high affinity CXC-chemokine ligand for the IP-10/Mig receptor (CXCR3).</title>
        <authorList>
            <person name="Tensen C.P."/>
            <person name="Flier J."/>
            <person name="van der Raaij-Helmer E.M.H."/>
            <person name="Sampat-Sardjoepersad S."/>
            <person name="van der Schors R.C."/>
            <person name="Leurs R."/>
            <person name="Scheper R.J."/>
            <person name="Boorsma D.M."/>
            <person name="Willemze R."/>
        </authorList>
    </citation>
    <scope>PROTEIN SEQUENCE OF 23-28</scope>
    <source>
        <tissue>Keratinocyte</tissue>
    </source>
</reference>
<evidence type="ECO:0000250" key="1"/>
<evidence type="ECO:0000256" key="2">
    <source>
        <dbReference type="SAM" id="MobiDB-lite"/>
    </source>
</evidence>
<evidence type="ECO:0000269" key="3">
    <source>
    </source>
</evidence>
<evidence type="ECO:0000305" key="4"/>
<dbReference type="EMBL" id="X72755">
    <property type="protein sequence ID" value="CAA51284.1"/>
    <property type="molecule type" value="mRNA"/>
</dbReference>
<dbReference type="EMBL" id="BC063122">
    <property type="protein sequence ID" value="AAH63122.1"/>
    <property type="molecule type" value="mRNA"/>
</dbReference>
<dbReference type="EMBL" id="BC095396">
    <property type="protein sequence ID" value="AAH95396.1"/>
    <property type="molecule type" value="mRNA"/>
</dbReference>
<dbReference type="CCDS" id="CCDS34014.1"/>
<dbReference type="PIR" id="JN0470">
    <property type="entry name" value="JN0470"/>
</dbReference>
<dbReference type="RefSeq" id="NP_002407.1">
    <property type="nucleotide sequence ID" value="NM_002416.3"/>
</dbReference>
<dbReference type="SMR" id="Q07325"/>
<dbReference type="BioGRID" id="110429">
    <property type="interactions" value="77"/>
</dbReference>
<dbReference type="DIP" id="DIP-5892N"/>
<dbReference type="FunCoup" id="Q07325">
    <property type="interactions" value="727"/>
</dbReference>
<dbReference type="IntAct" id="Q07325">
    <property type="interactions" value="74"/>
</dbReference>
<dbReference type="MINT" id="Q07325"/>
<dbReference type="STRING" id="9606.ENSP00000354901"/>
<dbReference type="iPTMnet" id="Q07325"/>
<dbReference type="PhosphoSitePlus" id="Q07325"/>
<dbReference type="BioMuta" id="CXCL9"/>
<dbReference type="DMDM" id="585487"/>
<dbReference type="MassIVE" id="Q07325"/>
<dbReference type="PaxDb" id="9606-ENSP00000354901"/>
<dbReference type="PeptideAtlas" id="Q07325"/>
<dbReference type="ProteomicsDB" id="58509"/>
<dbReference type="ABCD" id="Q07325">
    <property type="antibodies" value="4 sequenced antibodies"/>
</dbReference>
<dbReference type="Antibodypedia" id="24750">
    <property type="antibodies" value="654 antibodies from 37 providers"/>
</dbReference>
<dbReference type="CPTC" id="Q07325">
    <property type="antibodies" value="2 antibodies"/>
</dbReference>
<dbReference type="DNASU" id="4283"/>
<dbReference type="Ensembl" id="ENST00000264888.6">
    <property type="protein sequence ID" value="ENSP00000354901.4"/>
    <property type="gene ID" value="ENSG00000138755.6"/>
</dbReference>
<dbReference type="GeneID" id="4283"/>
<dbReference type="KEGG" id="hsa:4283"/>
<dbReference type="MANE-Select" id="ENST00000264888.6">
    <property type="protein sequence ID" value="ENSP00000354901.4"/>
    <property type="RefSeq nucleotide sequence ID" value="NM_002416.3"/>
    <property type="RefSeq protein sequence ID" value="NP_002407.1"/>
</dbReference>
<dbReference type="UCSC" id="uc003hjh.2">
    <property type="organism name" value="human"/>
</dbReference>
<dbReference type="AGR" id="HGNC:7098"/>
<dbReference type="CTD" id="4283"/>
<dbReference type="DisGeNET" id="4283"/>
<dbReference type="GeneCards" id="CXCL9"/>
<dbReference type="HGNC" id="HGNC:7098">
    <property type="gene designation" value="CXCL9"/>
</dbReference>
<dbReference type="HPA" id="ENSG00000138755">
    <property type="expression patterns" value="Tissue enriched (lymphoid)"/>
</dbReference>
<dbReference type="MIM" id="601704">
    <property type="type" value="gene"/>
</dbReference>
<dbReference type="neXtProt" id="NX_Q07325"/>
<dbReference type="OpenTargets" id="ENSG00000138755"/>
<dbReference type="PharmGKB" id="PA35495"/>
<dbReference type="VEuPathDB" id="HostDB:ENSG00000138755"/>
<dbReference type="eggNOG" id="ENOG502TDRN">
    <property type="taxonomic scope" value="Eukaryota"/>
</dbReference>
<dbReference type="GeneTree" id="ENSGT00940000161751"/>
<dbReference type="HOGENOM" id="CLU_143902_2_2_1"/>
<dbReference type="InParanoid" id="Q07325"/>
<dbReference type="OMA" id="GKKYQKN"/>
<dbReference type="OrthoDB" id="9948647at2759"/>
<dbReference type="PAN-GO" id="Q07325">
    <property type="GO annotations" value="8 GO annotations based on evolutionary models"/>
</dbReference>
<dbReference type="PhylomeDB" id="Q07325"/>
<dbReference type="TreeFam" id="TF333433"/>
<dbReference type="PathwayCommons" id="Q07325"/>
<dbReference type="Reactome" id="R-HSA-380108">
    <property type="pathway name" value="Chemokine receptors bind chemokines"/>
</dbReference>
<dbReference type="Reactome" id="R-HSA-418594">
    <property type="pathway name" value="G alpha (i) signalling events"/>
</dbReference>
<dbReference type="SignaLink" id="Q07325"/>
<dbReference type="SIGNOR" id="Q07325"/>
<dbReference type="BioGRID-ORCS" id="4283">
    <property type="hits" value="8 hits in 1155 CRISPR screens"/>
</dbReference>
<dbReference type="ChiTaRS" id="CXCL9">
    <property type="organism name" value="human"/>
</dbReference>
<dbReference type="GeneWiki" id="CXCL9"/>
<dbReference type="GenomeRNAi" id="4283"/>
<dbReference type="Pharos" id="Q07325">
    <property type="development level" value="Tbio"/>
</dbReference>
<dbReference type="PRO" id="PR:Q07325"/>
<dbReference type="Proteomes" id="UP000005640">
    <property type="component" value="Chromosome 4"/>
</dbReference>
<dbReference type="RNAct" id="Q07325">
    <property type="molecule type" value="protein"/>
</dbReference>
<dbReference type="Bgee" id="ENSG00000138755">
    <property type="expression patterns" value="Expressed in vermiform appendix and 132 other cell types or tissues"/>
</dbReference>
<dbReference type="GO" id="GO:0009897">
    <property type="term" value="C:external side of plasma membrane"/>
    <property type="evidence" value="ECO:0007669"/>
    <property type="project" value="Ensembl"/>
</dbReference>
<dbReference type="GO" id="GO:0005576">
    <property type="term" value="C:extracellular region"/>
    <property type="evidence" value="ECO:0000304"/>
    <property type="project" value="Reactome"/>
</dbReference>
<dbReference type="GO" id="GO:0005615">
    <property type="term" value="C:extracellular space"/>
    <property type="evidence" value="ECO:0000318"/>
    <property type="project" value="GO_Central"/>
</dbReference>
<dbReference type="GO" id="GO:0008009">
    <property type="term" value="F:chemokine activity"/>
    <property type="evidence" value="ECO:0000314"/>
    <property type="project" value="UniProtKB"/>
</dbReference>
<dbReference type="GO" id="GO:0045236">
    <property type="term" value="F:CXCR chemokine receptor binding"/>
    <property type="evidence" value="ECO:0000318"/>
    <property type="project" value="GO_Central"/>
</dbReference>
<dbReference type="GO" id="GO:0048248">
    <property type="term" value="F:CXCR3 chemokine receptor binding"/>
    <property type="evidence" value="ECO:0000314"/>
    <property type="project" value="UniProtKB"/>
</dbReference>
<dbReference type="GO" id="GO:0005125">
    <property type="term" value="F:cytokine activity"/>
    <property type="evidence" value="ECO:0000304"/>
    <property type="project" value="ProtInc"/>
</dbReference>
<dbReference type="GO" id="GO:0007189">
    <property type="term" value="P:adenylate cyclase-activating G protein-coupled receptor signaling pathway"/>
    <property type="evidence" value="ECO:0000314"/>
    <property type="project" value="UniProtKB"/>
</dbReference>
<dbReference type="GO" id="GO:0007267">
    <property type="term" value="P:cell-cell signaling"/>
    <property type="evidence" value="ECO:0000304"/>
    <property type="project" value="ProtInc"/>
</dbReference>
<dbReference type="GO" id="GO:0006968">
    <property type="term" value="P:cellular defense response"/>
    <property type="evidence" value="ECO:0000304"/>
    <property type="project" value="ProtInc"/>
</dbReference>
<dbReference type="GO" id="GO:0071222">
    <property type="term" value="P:cellular response to lipopolysaccharide"/>
    <property type="evidence" value="ECO:0000318"/>
    <property type="project" value="GO_Central"/>
</dbReference>
<dbReference type="GO" id="GO:0070098">
    <property type="term" value="P:chemokine-mediated signaling pathway"/>
    <property type="evidence" value="ECO:0000318"/>
    <property type="project" value="GO_Central"/>
</dbReference>
<dbReference type="GO" id="GO:0006935">
    <property type="term" value="P:chemotaxis"/>
    <property type="evidence" value="ECO:0000314"/>
    <property type="project" value="UniProtKB"/>
</dbReference>
<dbReference type="GO" id="GO:0006952">
    <property type="term" value="P:defense response"/>
    <property type="evidence" value="ECO:0000304"/>
    <property type="project" value="ProtInc"/>
</dbReference>
<dbReference type="GO" id="GO:0051607">
    <property type="term" value="P:defense response to virus"/>
    <property type="evidence" value="ECO:0007669"/>
    <property type="project" value="Ensembl"/>
</dbReference>
<dbReference type="GO" id="GO:0007186">
    <property type="term" value="P:G protein-coupled receptor signaling pathway"/>
    <property type="evidence" value="ECO:0000304"/>
    <property type="project" value="ProtInc"/>
</dbReference>
<dbReference type="GO" id="GO:0006955">
    <property type="term" value="P:immune response"/>
    <property type="evidence" value="ECO:0007669"/>
    <property type="project" value="InterPro"/>
</dbReference>
<dbReference type="GO" id="GO:0006954">
    <property type="term" value="P:inflammatory response"/>
    <property type="evidence" value="ECO:0000318"/>
    <property type="project" value="GO_Central"/>
</dbReference>
<dbReference type="GO" id="GO:0030593">
    <property type="term" value="P:neutrophil chemotaxis"/>
    <property type="evidence" value="ECO:0000318"/>
    <property type="project" value="GO_Central"/>
</dbReference>
<dbReference type="GO" id="GO:0045663">
    <property type="term" value="P:positive regulation of myoblast differentiation"/>
    <property type="evidence" value="ECO:0007669"/>
    <property type="project" value="Ensembl"/>
</dbReference>
<dbReference type="GO" id="GO:1901741">
    <property type="term" value="P:positive regulation of myoblast fusion"/>
    <property type="evidence" value="ECO:0007669"/>
    <property type="project" value="Ensembl"/>
</dbReference>
<dbReference type="GO" id="GO:0051281">
    <property type="term" value="P:positive regulation of release of sequestered calcium ion into cytosol"/>
    <property type="evidence" value="ECO:0000314"/>
    <property type="project" value="UniProtKB"/>
</dbReference>
<dbReference type="GO" id="GO:0042127">
    <property type="term" value="P:regulation of cell population proliferation"/>
    <property type="evidence" value="ECO:0000314"/>
    <property type="project" value="UniProtKB"/>
</dbReference>
<dbReference type="GO" id="GO:0007165">
    <property type="term" value="P:signal transduction"/>
    <property type="evidence" value="ECO:0000304"/>
    <property type="project" value="ProtInc"/>
</dbReference>
<dbReference type="CDD" id="cd00273">
    <property type="entry name" value="Chemokine_CXC"/>
    <property type="match status" value="1"/>
</dbReference>
<dbReference type="FunFam" id="2.40.50.40:FF:000004">
    <property type="entry name" value="C-X-C motif chemokine"/>
    <property type="match status" value="1"/>
</dbReference>
<dbReference type="Gene3D" id="2.40.50.40">
    <property type="match status" value="1"/>
</dbReference>
<dbReference type="InterPro" id="IPR039809">
    <property type="entry name" value="Chemokine_b/g/d"/>
</dbReference>
<dbReference type="InterPro" id="IPR001089">
    <property type="entry name" value="Chemokine_CXC"/>
</dbReference>
<dbReference type="InterPro" id="IPR018048">
    <property type="entry name" value="Chemokine_CXC_CS"/>
</dbReference>
<dbReference type="InterPro" id="IPR001811">
    <property type="entry name" value="Chemokine_IL8-like_dom"/>
</dbReference>
<dbReference type="InterPro" id="IPR033899">
    <property type="entry name" value="CXC_Chemokine_domain"/>
</dbReference>
<dbReference type="InterPro" id="IPR036048">
    <property type="entry name" value="Interleukin_8-like_sf"/>
</dbReference>
<dbReference type="PANTHER" id="PTHR12015:SF210">
    <property type="entry name" value="C-X-C MOTIF CHEMOKINE 9"/>
    <property type="match status" value="1"/>
</dbReference>
<dbReference type="PANTHER" id="PTHR12015">
    <property type="entry name" value="SMALL INDUCIBLE CYTOKINE A"/>
    <property type="match status" value="1"/>
</dbReference>
<dbReference type="Pfam" id="PF00048">
    <property type="entry name" value="IL8"/>
    <property type="match status" value="1"/>
</dbReference>
<dbReference type="PRINTS" id="PR00437">
    <property type="entry name" value="SMALLCYTKCXC"/>
</dbReference>
<dbReference type="SMART" id="SM00199">
    <property type="entry name" value="SCY"/>
    <property type="match status" value="1"/>
</dbReference>
<dbReference type="SUPFAM" id="SSF54117">
    <property type="entry name" value="Interleukin 8-like chemokines"/>
    <property type="match status" value="1"/>
</dbReference>
<dbReference type="PROSITE" id="PS00471">
    <property type="entry name" value="SMALL_CYTOKINES_CXC"/>
    <property type="match status" value="1"/>
</dbReference>
<organism>
    <name type="scientific">Homo sapiens</name>
    <name type="common">Human</name>
    <dbReference type="NCBI Taxonomy" id="9606"/>
    <lineage>
        <taxon>Eukaryota</taxon>
        <taxon>Metazoa</taxon>
        <taxon>Chordata</taxon>
        <taxon>Craniata</taxon>
        <taxon>Vertebrata</taxon>
        <taxon>Euteleostomi</taxon>
        <taxon>Mammalia</taxon>
        <taxon>Eutheria</taxon>
        <taxon>Euarchontoglires</taxon>
        <taxon>Primates</taxon>
        <taxon>Haplorrhini</taxon>
        <taxon>Catarrhini</taxon>
        <taxon>Hominidae</taxon>
        <taxon>Homo</taxon>
    </lineage>
</organism>
<accession>Q07325</accession>
<accession>Q503B4</accession>
<feature type="signal peptide" evidence="3">
    <location>
        <begin position="1"/>
        <end position="22"/>
    </location>
</feature>
<feature type="chain" id="PRO_0000005099" description="C-X-C motif chemokine 9">
    <location>
        <begin position="23"/>
        <end position="125"/>
    </location>
</feature>
<feature type="region of interest" description="Disordered" evidence="2">
    <location>
        <begin position="93"/>
        <end position="125"/>
    </location>
</feature>
<feature type="compositionally biased region" description="Basic residues" evidence="2">
    <location>
        <begin position="94"/>
        <end position="125"/>
    </location>
</feature>
<feature type="disulfide bond" evidence="1">
    <location>
        <begin position="31"/>
        <end position="58"/>
    </location>
</feature>
<feature type="disulfide bond" evidence="1">
    <location>
        <begin position="33"/>
        <end position="74"/>
    </location>
</feature>
<proteinExistence type="evidence at protein level"/>
<name>CXCL9_HUMAN</name>
<comment type="function">
    <text>Cytokine that affects the growth, movement, or activation state of cells that participate in immune and inflammatory response. Chemotactic for activated T-cells. Binds to CXCR3.</text>
</comment>
<comment type="interaction">
    <interactant intactId="EBI-3911467">
        <id>Q07325</id>
    </interactant>
    <interactant intactId="EBI-19125216">
        <id>Q86WK6</id>
        <label>AMIGO1</label>
    </interactant>
    <organismsDiffer>false</organismsDiffer>
    <experiments>3</experiments>
</comment>
<comment type="interaction">
    <interactant intactId="EBI-3911467">
        <id>Q07325</id>
    </interactant>
    <interactant intactId="EBI-13059134">
        <id>Q13520</id>
        <label>AQP6</label>
    </interactant>
    <organismsDiffer>false</organismsDiffer>
    <experiments>3</experiments>
</comment>
<comment type="interaction">
    <interactant intactId="EBI-3911467">
        <id>Q07325</id>
    </interactant>
    <interactant intactId="EBI-12894731">
        <id>Q9UN42</id>
        <label>ATP1B4</label>
    </interactant>
    <organismsDiffer>false</organismsDiffer>
    <experiments>3</experiments>
</comment>
<comment type="interaction">
    <interactant intactId="EBI-3911467">
        <id>Q07325</id>
    </interactant>
    <interactant intactId="EBI-11532900">
        <id>J3KQ12</id>
        <label>BSCL2</label>
    </interactant>
    <organismsDiffer>false</organismsDiffer>
    <experiments>3</experiments>
</comment>
<comment type="interaction">
    <interactant intactId="EBI-3911467">
        <id>Q07325</id>
    </interactant>
    <interactant intactId="EBI-17953245">
        <id>Q6UXG8-3</id>
        <label>BTNL9</label>
    </interactant>
    <organismsDiffer>false</organismsDiffer>
    <experiments>3</experiments>
</comment>
<comment type="interaction">
    <interactant intactId="EBI-3911467">
        <id>Q07325</id>
    </interactant>
    <interactant intactId="EBI-953695">
        <id>O00585</id>
        <label>CCL21</label>
    </interactant>
    <organismsDiffer>false</organismsDiffer>
    <experiments>2</experiments>
</comment>
<comment type="interaction">
    <interactant intactId="EBI-3911467">
        <id>Q07325</id>
    </interactant>
    <interactant intactId="EBI-7783416">
        <id>Q9Y258</id>
        <label>CCL26</label>
    </interactant>
    <organismsDiffer>false</organismsDiffer>
    <experiments>2</experiments>
</comment>
<comment type="interaction">
    <interactant intactId="EBI-3911467">
        <id>Q07325</id>
    </interactant>
    <interactant intactId="EBI-2848366">
        <id>P13501</id>
        <label>CCL5</label>
    </interactant>
    <organismsDiffer>false</organismsDiffer>
    <experiments>2</experiments>
</comment>
<comment type="interaction">
    <interactant intactId="EBI-3911467">
        <id>Q07325</id>
    </interactant>
    <interactant intactId="EBI-3906571">
        <id>P20138</id>
        <label>CD33</label>
    </interactant>
    <organismsDiffer>false</organismsDiffer>
    <experiments>3</experiments>
</comment>
<comment type="interaction">
    <interactant intactId="EBI-3911467">
        <id>Q07325</id>
    </interactant>
    <interactant intactId="EBI-17447707">
        <id>Q9H9P2</id>
        <label>CHODL</label>
    </interactant>
    <organismsDiffer>false</organismsDiffer>
    <experiments>3</experiments>
</comment>
<comment type="interaction">
    <interactant intactId="EBI-3911467">
        <id>Q07325</id>
    </interactant>
    <interactant intactId="EBI-751440">
        <id>P57739</id>
        <label>CLDN2</label>
    </interactant>
    <organismsDiffer>false</organismsDiffer>
    <experiments>3</experiments>
</comment>
<comment type="interaction">
    <interactant intactId="EBI-3911467">
        <id>Q07325</id>
    </interactant>
    <interactant intactId="EBI-18400628">
        <id>O00501</id>
        <label>CLDN5</label>
    </interactant>
    <organismsDiffer>false</organismsDiffer>
    <experiments>3</experiments>
</comment>
<comment type="interaction">
    <interactant intactId="EBI-3911467">
        <id>Q07325</id>
    </interactant>
    <interactant intactId="EBI-740744">
        <id>O95471</id>
        <label>CLDN7</label>
    </interactant>
    <organismsDiffer>false</organismsDiffer>
    <experiments>3</experiments>
</comment>
<comment type="interaction">
    <interactant intactId="EBI-3911467">
        <id>Q07325</id>
    </interactant>
    <interactant intactId="EBI-11977093">
        <id>Q6ZS10</id>
        <label>CLEC17A</label>
    </interactant>
    <organismsDiffer>false</organismsDiffer>
    <experiments>3</experiments>
</comment>
<comment type="interaction">
    <interactant intactId="EBI-3911467">
        <id>Q07325</id>
    </interactant>
    <interactant intactId="EBI-11749983">
        <id>Q9UHP7-3</id>
        <label>CLEC2D</label>
    </interactant>
    <organismsDiffer>false</organismsDiffer>
    <experiments>3</experiments>
</comment>
<comment type="interaction">
    <interactant intactId="EBI-3911467">
        <id>Q07325</id>
    </interactant>
    <interactant intactId="EBI-12807010">
        <id>Q9ULY5</id>
        <label>CLEC4E</label>
    </interactant>
    <organismsDiffer>false</organismsDiffer>
    <experiments>3</experiments>
</comment>
<comment type="interaction">
    <interactant intactId="EBI-3911467">
        <id>Q07325</id>
    </interactant>
    <interactant intactId="EBI-11989440">
        <id>Q9BXN2-6</id>
        <label>CLEC7A</label>
    </interactant>
    <organismsDiffer>false</organismsDiffer>
    <experiments>3</experiments>
</comment>
<comment type="interaction">
    <interactant intactId="EBI-3911467">
        <id>Q07325</id>
    </interactant>
    <interactant intactId="EBI-7815386">
        <id>P02778</id>
        <label>CXCL10</label>
    </interactant>
    <organismsDiffer>false</organismsDiffer>
    <experiments>2</experiments>
</comment>
<comment type="interaction">
    <interactant intactId="EBI-3911467">
        <id>Q07325</id>
    </interactant>
    <interactant intactId="EBI-3913254">
        <id>P48061</id>
        <label>CXCL12</label>
    </interactant>
    <organismsDiffer>false</organismsDiffer>
    <experiments>2</experiments>
</comment>
<comment type="interaction">
    <interactant intactId="EBI-3911467">
        <id>Q07325</id>
    </interactant>
    <interactant intactId="EBI-2798068">
        <id>O95715</id>
        <label>CXCL14</label>
    </interactant>
    <organismsDiffer>false</organismsDiffer>
    <experiments>2</experiments>
</comment>
<comment type="interaction">
    <interactant intactId="EBI-3911467">
        <id>Q07325</id>
    </interactant>
    <interactant intactId="EBI-2871277">
        <id>P27487</id>
        <label>DPP4</label>
    </interactant>
    <organismsDiffer>false</organismsDiffer>
    <experiments>2</experiments>
</comment>
<comment type="interaction">
    <interactant intactId="EBI-3911467">
        <id>Q07325</id>
    </interactant>
    <interactant intactId="EBI-17468158">
        <id>Q6UW88-2</id>
        <label>EPGN</label>
    </interactant>
    <organismsDiffer>false</organismsDiffer>
    <experiments>3</experiments>
</comment>
<comment type="interaction">
    <interactant intactId="EBI-3911467">
        <id>Q07325</id>
    </interactant>
    <interactant intactId="EBI-17272224">
        <id>O14944</id>
        <label>EREG</label>
    </interactant>
    <organismsDiffer>false</organismsDiffer>
    <experiments>3</experiments>
</comment>
<comment type="interaction">
    <interactant intactId="EBI-3911467">
        <id>Q07325</id>
    </interactant>
    <interactant intactId="EBI-17187481">
        <id>P12318-2</id>
        <label>FCGR2A</label>
    </interactant>
    <organismsDiffer>false</organismsDiffer>
    <experiments>3</experiments>
</comment>
<comment type="interaction">
    <interactant intactId="EBI-3911467">
        <id>Q07325</id>
    </interactant>
    <interactant intactId="EBI-2833872">
        <id>O15552</id>
        <label>FFAR2</label>
    </interactant>
    <organismsDiffer>false</organismsDiffer>
    <experiments>3</experiments>
</comment>
<comment type="interaction">
    <interactant intactId="EBI-3911467">
        <id>Q07325</id>
    </interactant>
    <interactant intactId="EBI-12887376">
        <id>Q96LL3</id>
        <label>FIMP</label>
    </interactant>
    <organismsDiffer>false</organismsDiffer>
    <experiments>3</experiments>
</comment>
<comment type="interaction">
    <interactant intactId="EBI-3911467">
        <id>Q07325</id>
    </interactant>
    <interactant intactId="EBI-12142257">
        <id>Q8TBE3</id>
        <label>FNDC9</label>
    </interactant>
    <organismsDiffer>false</organismsDiffer>
    <experiments>3</experiments>
</comment>
<comment type="interaction">
    <interactant intactId="EBI-3911467">
        <id>Q07325</id>
    </interactant>
    <interactant intactId="EBI-12817667">
        <id>Q11130</id>
        <label>FUT7</label>
    </interactant>
    <organismsDiffer>false</organismsDiffer>
    <experiments>3</experiments>
</comment>
<comment type="interaction">
    <interactant intactId="EBI-3911467">
        <id>Q07325</id>
    </interactant>
    <interactant intactId="EBI-17565645">
        <id>P08034</id>
        <label>GJB1</label>
    </interactant>
    <organismsDiffer>false</organismsDiffer>
    <experiments>3</experiments>
</comment>
<comment type="interaction">
    <interactant intactId="EBI-3911467">
        <id>Q07325</id>
    </interactant>
    <interactant intactId="EBI-3917143">
        <id>Q5T7V8</id>
        <label>GORAB</label>
    </interactant>
    <organismsDiffer>false</organismsDiffer>
    <experiments>3</experiments>
</comment>
<comment type="interaction">
    <interactant intactId="EBI-3911467">
        <id>Q07325</id>
    </interactant>
    <interactant intactId="EBI-18076404">
        <id>O15529</id>
        <label>GPR42</label>
    </interactant>
    <organismsDiffer>false</organismsDiffer>
    <experiments>3</experiments>
</comment>
<comment type="interaction">
    <interactant intactId="EBI-3911467">
        <id>Q07325</id>
    </interactant>
    <interactant intactId="EBI-3905457">
        <id>P38484</id>
        <label>IFNGR2</label>
    </interactant>
    <organismsDiffer>false</organismsDiffer>
    <experiments>3</experiments>
</comment>
<comment type="interaction">
    <interactant intactId="EBI-3911467">
        <id>Q07325</id>
    </interactant>
    <interactant intactId="EBI-12811565">
        <id>Q9NQX7-3</id>
        <label>ITM2C</label>
    </interactant>
    <organismsDiffer>false</organismsDiffer>
    <experiments>3</experiments>
</comment>
<comment type="interaction">
    <interactant intactId="EBI-3911467">
        <id>Q07325</id>
    </interactant>
    <interactant intactId="EBI-749265">
        <id>Q8N6L0</id>
        <label>KASH5</label>
    </interactant>
    <organismsDiffer>false</organismsDiffer>
    <experiments>3</experiments>
</comment>
<comment type="interaction">
    <interactant intactId="EBI-3911467">
        <id>Q07325</id>
    </interactant>
    <interactant intactId="EBI-8632435">
        <id>P43628</id>
        <label>KIR2DL3</label>
    </interactant>
    <organismsDiffer>false</organismsDiffer>
    <experiments>3</experiments>
</comment>
<comment type="interaction">
    <interactant intactId="EBI-3911467">
        <id>Q07325</id>
    </interactant>
    <interactant intactId="EBI-10173166">
        <id>Q5T700</id>
        <label>LDLRAD1</label>
    </interactant>
    <organismsDiffer>false</organismsDiffer>
    <experiments>3</experiments>
</comment>
<comment type="interaction">
    <interactant intactId="EBI-3911467">
        <id>Q07325</id>
    </interactant>
    <interactant intactId="EBI-17490413">
        <id>A8MZ59</id>
        <label>LEUTX</label>
    </interactant>
    <organismsDiffer>false</organismsDiffer>
    <experiments>3</experiments>
</comment>
<comment type="interaction">
    <interactant intactId="EBI-3911467">
        <id>Q07325</id>
    </interactant>
    <interactant intactId="EBI-11304917">
        <id>Q8N386</id>
        <label>LRRC25</label>
    </interactant>
    <organismsDiffer>false</organismsDiffer>
    <experiments>3</experiments>
</comment>
<comment type="interaction">
    <interactant intactId="EBI-3911467">
        <id>Q07325</id>
    </interactant>
    <interactant intactId="EBI-10264855">
        <id>Q8N112</id>
        <label>LSMEM2</label>
    </interactant>
    <organismsDiffer>false</organismsDiffer>
    <experiments>3</experiments>
</comment>
<comment type="interaction">
    <interactant intactId="EBI-3911467">
        <id>Q07325</id>
    </interactant>
    <interactant intactId="EBI-12201447">
        <id>Q95460-2</id>
        <label>MR1</label>
    </interactant>
    <organismsDiffer>false</organismsDiffer>
    <experiments>3</experiments>
</comment>
<comment type="interaction">
    <interactant intactId="EBI-3911467">
        <id>Q07325</id>
    </interactant>
    <interactant intactId="EBI-3923617">
        <id>Q9H2K0</id>
        <label>MTIF3</label>
    </interactant>
    <organismsDiffer>false</organismsDiffer>
    <experiments>3</experiments>
</comment>
<comment type="interaction">
    <interactant intactId="EBI-3911467">
        <id>Q07325</id>
    </interactant>
    <interactant intactId="EBI-17263240">
        <id>P15941-11</id>
        <label>MUC1</label>
    </interactant>
    <organismsDiffer>false</organismsDiffer>
    <experiments>3</experiments>
</comment>
<comment type="interaction">
    <interactant intactId="EBI-3911467">
        <id>Q07325</id>
    </interactant>
    <interactant intactId="EBI-10969203">
        <id>O14524-2</id>
        <label>NEMP1</label>
    </interactant>
    <organismsDiffer>false</organismsDiffer>
    <experiments>3</experiments>
</comment>
<comment type="interaction">
    <interactant intactId="EBI-3911467">
        <id>Q07325</id>
    </interactant>
    <interactant intactId="EBI-2565740">
        <id>P02776</id>
        <label>PF4</label>
    </interactant>
    <organismsDiffer>false</organismsDiffer>
    <experiments>3</experiments>
</comment>
<comment type="interaction">
    <interactant intactId="EBI-3911467">
        <id>Q07325</id>
    </interactant>
    <interactant intactId="EBI-718973">
        <id>P02775</id>
        <label>PPBP</label>
    </interactant>
    <organismsDiffer>false</organismsDiffer>
    <experiments>2</experiments>
</comment>
<comment type="interaction">
    <interactant intactId="EBI-3911467">
        <id>Q07325</id>
    </interactant>
    <interactant intactId="EBI-1220572">
        <id>P54829</id>
        <label>PTPN5</label>
    </interactant>
    <organismsDiffer>false</organismsDiffer>
    <experiments>3</experiments>
</comment>
<comment type="interaction">
    <interactant intactId="EBI-3911467">
        <id>Q07325</id>
    </interactant>
    <interactant intactId="EBI-15853497">
        <id>Q9UBD6</id>
        <label>RHCG</label>
    </interactant>
    <organismsDiffer>false</organismsDiffer>
    <experiments>3</experiments>
</comment>
<comment type="interaction">
    <interactant intactId="EBI-3911467">
        <id>Q07325</id>
    </interactant>
    <interactant intactId="EBI-10197617">
        <id>P11686</id>
        <label>SFTPC</label>
    </interactant>
    <organismsDiffer>false</organismsDiffer>
    <experiments>7</experiments>
</comment>
<comment type="interaction">
    <interactant intactId="EBI-3911467">
        <id>Q07325</id>
    </interactant>
    <interactant intactId="EBI-3923031">
        <id>Q14973</id>
        <label>SLC10A1</label>
    </interactant>
    <organismsDiffer>false</organismsDiffer>
    <experiments>3</experiments>
</comment>
<comment type="interaction">
    <interactant intactId="EBI-3911467">
        <id>Q07325</id>
    </interactant>
    <interactant intactId="EBI-726491">
        <id>Q9NY26</id>
        <label>SLC39A1</label>
    </interactant>
    <organismsDiffer>false</organismsDiffer>
    <experiments>3</experiments>
</comment>
<comment type="interaction">
    <interactant intactId="EBI-3911467">
        <id>Q07325</id>
    </interactant>
    <interactant intactId="EBI-17280858">
        <id>Q8WWF3</id>
        <label>SSMEM1</label>
    </interactant>
    <organismsDiffer>false</organismsDiffer>
    <experiments>3</experiments>
</comment>
<comment type="interaction">
    <interactant intactId="EBI-3911467">
        <id>Q07325</id>
    </interactant>
    <interactant intactId="EBI-18194029">
        <id>Q96L08</id>
        <label>SUSD3</label>
    </interactant>
    <organismsDiffer>false</organismsDiffer>
    <experiments>3</experiments>
</comment>
<comment type="interaction">
    <interactant intactId="EBI-3911467">
        <id>Q07325</id>
    </interactant>
    <interactant intactId="EBI-7131783">
        <id>Q8N205</id>
        <label>SYNE4</label>
    </interactant>
    <organismsDiffer>false</organismsDiffer>
    <experiments>3</experiments>
</comment>
<comment type="interaction">
    <interactant intactId="EBI-3911467">
        <id>Q07325</id>
    </interactant>
    <interactant intactId="EBI-13351685">
        <id>Q96CE8</id>
        <label>TM4SF18</label>
    </interactant>
    <organismsDiffer>false</organismsDiffer>
    <experiments>3</experiments>
</comment>
<comment type="interaction">
    <interactant intactId="EBI-3911467">
        <id>Q07325</id>
    </interactant>
    <interactant intactId="EBI-7560959">
        <id>Q9Y3A6</id>
        <label>TMED5</label>
    </interactant>
    <organismsDiffer>false</organismsDiffer>
    <experiments>3</experiments>
</comment>
<comment type="interaction">
    <interactant intactId="EBI-3911467">
        <id>Q07325</id>
    </interactant>
    <interactant intactId="EBI-2821497">
        <id>Q9BVX2</id>
        <label>TMEM106C</label>
    </interactant>
    <organismsDiffer>false</organismsDiffer>
    <experiments>3</experiments>
</comment>
<comment type="interaction">
    <interactant intactId="EBI-3911467">
        <id>Q07325</id>
    </interactant>
    <interactant intactId="EBI-8642211">
        <id>Q8WY98</id>
        <label>TMEM234</label>
    </interactant>
    <organismsDiffer>false</organismsDiffer>
    <experiments>3</experiments>
</comment>
<comment type="interaction">
    <interactant intactId="EBI-3911467">
        <id>Q07325</id>
    </interactant>
    <interactant intactId="EBI-10982110">
        <id>Q96Q45-2</id>
        <label>TMEM237</label>
    </interactant>
    <organismsDiffer>false</organismsDiffer>
    <experiments>5</experiments>
</comment>
<comment type="interaction">
    <interactant intactId="EBI-3911467">
        <id>Q07325</id>
    </interactant>
    <interactant intactId="EBI-12345267">
        <id>O15393-2</id>
        <label>TMPRSS2</label>
    </interactant>
    <organismsDiffer>false</organismsDiffer>
    <experiments>3</experiments>
</comment>
<comment type="interaction">
    <interactant intactId="EBI-3911467">
        <id>Q07325</id>
    </interactant>
    <interactant intactId="EBI-524131">
        <id>O43557</id>
        <label>TNFSF14</label>
    </interactant>
    <organismsDiffer>false</organismsDiffer>
    <experiments>3</experiments>
</comment>
<comment type="interaction">
    <interactant intactId="EBI-3911467">
        <id>Q07325</id>
    </interactant>
    <interactant intactId="EBI-13076860">
        <id>P32971</id>
        <label>TNFSF8</label>
    </interactant>
    <organismsDiffer>false</organismsDiffer>
    <experiments>3</experiments>
</comment>
<comment type="interaction">
    <interactant intactId="EBI-3911467">
        <id>Q07325</id>
    </interactant>
    <interactant intactId="EBI-17670824">
        <id>Q8WUV1</id>
        <label>TSPAN18</label>
    </interactant>
    <organismsDiffer>false</organismsDiffer>
    <experiments>3</experiments>
</comment>
<comment type="subcellular location">
    <subcellularLocation>
        <location>Secreted</location>
    </subcellularLocation>
</comment>
<comment type="induction">
    <text>By IFNG/IFN-gamma. The induction is enhanced by TNF in dermal fibroblasts and vein endothelial cells.</text>
</comment>
<comment type="similarity">
    <text evidence="4">Belongs to the intercrine alpha (chemokine CxC) family.</text>
</comment>
<comment type="online information" name="Wikipedia">
    <link uri="https://en.wikipedia.org/wiki/CXCL9"/>
    <text>CXCL9 entry</text>
</comment>
<sequence>MKKSGVLFLLGIILLVLIGVQGTPVVRKGRCSCISTNQGTIHLQSLKDLKQFAPSPSCEKIEIIATLKNGVQTCLNPDSADVKELIKKWEKQVSQKKKQKNGKKHQKKKVLKVRKSQRSRQKKTT</sequence>
<protein>
    <recommendedName>
        <fullName>C-X-C motif chemokine 9</fullName>
    </recommendedName>
    <alternativeName>
        <fullName>Gamma-interferon-induced monokine</fullName>
    </alternativeName>
    <alternativeName>
        <fullName>Monokine induced by interferon-gamma</fullName>
        <shortName>HuMIG</shortName>
        <shortName>MIG</shortName>
    </alternativeName>
    <alternativeName>
        <fullName>Small-inducible cytokine B9</fullName>
    </alternativeName>
</protein>